<protein>
    <recommendedName>
        <fullName>Protein YpbB</fullName>
    </recommendedName>
</protein>
<comment type="subunit">
    <text evidence="1">Interacts with RecS and SSB (ssbA); the 6 C-terminal residues of SSB are required for interaction with YpbB (PubMed:21170359).</text>
</comment>
<comment type="subcellular location">
    <subcellularLocation>
        <location evidence="1">Cytoplasm</location>
        <location evidence="1">Nucleoid</location>
    </subcellularLocation>
    <text evidence="1">Localizes in tight foci on the nucleoid; targeted to the nucleoid via the 6 C-terminal residues of SSB (ssbA) (PubMed:21170359).</text>
</comment>
<comment type="miscellaneous">
    <text evidence="2">The stop codon of ypbB overlaps with the start codon of recS, suggesting they are translationally coupled (Probable) (PubMed:21170359).</text>
</comment>
<sequence length="352" mass="40709">MSLNYFDIMVLDCLCKINGERSGSAVFHLFKGKRSSQTIQDAGLFQTAKYFGMAAKCSRSDISASLDKLEKHSYLAPMSESDTYKVTASGAAVLRHALSERPWPVHCHGAHYQQAAGVLWKRLSLLVQVLSHKQQGSRQYIPVTKDHKTLHWVKKYLSRHTDHIEMAKSLFAMLEAHLKKIENKAAQIFVYSLTSHHRIGYTSRQLADTLKEDEWYVYIMFWASVHYFIHSLPECEDALLKDLLSDVHLDNALTESTRKTWQMVKQGFPIQRIAEIRKLKTATIEDHIVEISLHEPAFMINDYVSAEDQLQIAEFAKRMRTNKIKQIRDGLEQRFSYFQIRLALTKQVQQYD</sequence>
<feature type="chain" id="PRO_0000049677" description="Protein YpbB">
    <location>
        <begin position="1"/>
        <end position="352"/>
    </location>
</feature>
<reference key="1">
    <citation type="journal article" date="1996" name="Microbiology">
        <title>Sequence analysis of the Bacillus subtilis chromosome region between the serA and kdg loci cloned in a yeast artificial chromosome.</title>
        <authorList>
            <person name="Sorokin A.V."/>
            <person name="Azevedo V."/>
            <person name="Zumstein E."/>
            <person name="Galleron N."/>
            <person name="Ehrlich S.D."/>
            <person name="Serror P."/>
        </authorList>
    </citation>
    <scope>NUCLEOTIDE SEQUENCE [GENOMIC DNA]</scope>
    <source>
        <strain>168 / Marburg / ATCC 6051 / DSM 10 / JCM 1465 / NBRC 13719 / NCIMB 3610 / NRRL NRS-744 / VKM B-501</strain>
    </source>
</reference>
<reference key="2">
    <citation type="journal article" date="1997" name="Nature">
        <title>The complete genome sequence of the Gram-positive bacterium Bacillus subtilis.</title>
        <authorList>
            <person name="Kunst F."/>
            <person name="Ogasawara N."/>
            <person name="Moszer I."/>
            <person name="Albertini A.M."/>
            <person name="Alloni G."/>
            <person name="Azevedo V."/>
            <person name="Bertero M.G."/>
            <person name="Bessieres P."/>
            <person name="Bolotin A."/>
            <person name="Borchert S."/>
            <person name="Borriss R."/>
            <person name="Boursier L."/>
            <person name="Brans A."/>
            <person name="Braun M."/>
            <person name="Brignell S.C."/>
            <person name="Bron S."/>
            <person name="Brouillet S."/>
            <person name="Bruschi C.V."/>
            <person name="Caldwell B."/>
            <person name="Capuano V."/>
            <person name="Carter N.M."/>
            <person name="Choi S.-K."/>
            <person name="Codani J.-J."/>
            <person name="Connerton I.F."/>
            <person name="Cummings N.J."/>
            <person name="Daniel R.A."/>
            <person name="Denizot F."/>
            <person name="Devine K.M."/>
            <person name="Duesterhoeft A."/>
            <person name="Ehrlich S.D."/>
            <person name="Emmerson P.T."/>
            <person name="Entian K.-D."/>
            <person name="Errington J."/>
            <person name="Fabret C."/>
            <person name="Ferrari E."/>
            <person name="Foulger D."/>
            <person name="Fritz C."/>
            <person name="Fujita M."/>
            <person name="Fujita Y."/>
            <person name="Fuma S."/>
            <person name="Galizzi A."/>
            <person name="Galleron N."/>
            <person name="Ghim S.-Y."/>
            <person name="Glaser P."/>
            <person name="Goffeau A."/>
            <person name="Golightly E.J."/>
            <person name="Grandi G."/>
            <person name="Guiseppi G."/>
            <person name="Guy B.J."/>
            <person name="Haga K."/>
            <person name="Haiech J."/>
            <person name="Harwood C.R."/>
            <person name="Henaut A."/>
            <person name="Hilbert H."/>
            <person name="Holsappel S."/>
            <person name="Hosono S."/>
            <person name="Hullo M.-F."/>
            <person name="Itaya M."/>
            <person name="Jones L.-M."/>
            <person name="Joris B."/>
            <person name="Karamata D."/>
            <person name="Kasahara Y."/>
            <person name="Klaerr-Blanchard M."/>
            <person name="Klein C."/>
            <person name="Kobayashi Y."/>
            <person name="Koetter P."/>
            <person name="Koningstein G."/>
            <person name="Krogh S."/>
            <person name="Kumano M."/>
            <person name="Kurita K."/>
            <person name="Lapidus A."/>
            <person name="Lardinois S."/>
            <person name="Lauber J."/>
            <person name="Lazarevic V."/>
            <person name="Lee S.-M."/>
            <person name="Levine A."/>
            <person name="Liu H."/>
            <person name="Masuda S."/>
            <person name="Mauel C."/>
            <person name="Medigue C."/>
            <person name="Medina N."/>
            <person name="Mellado R.P."/>
            <person name="Mizuno M."/>
            <person name="Moestl D."/>
            <person name="Nakai S."/>
            <person name="Noback M."/>
            <person name="Noone D."/>
            <person name="O'Reilly M."/>
            <person name="Ogawa K."/>
            <person name="Ogiwara A."/>
            <person name="Oudega B."/>
            <person name="Park S.-H."/>
            <person name="Parro V."/>
            <person name="Pohl T.M."/>
            <person name="Portetelle D."/>
            <person name="Porwollik S."/>
            <person name="Prescott A.M."/>
            <person name="Presecan E."/>
            <person name="Pujic P."/>
            <person name="Purnelle B."/>
            <person name="Rapoport G."/>
            <person name="Rey M."/>
            <person name="Reynolds S."/>
            <person name="Rieger M."/>
            <person name="Rivolta C."/>
            <person name="Rocha E."/>
            <person name="Roche B."/>
            <person name="Rose M."/>
            <person name="Sadaie Y."/>
            <person name="Sato T."/>
            <person name="Scanlan E."/>
            <person name="Schleich S."/>
            <person name="Schroeter R."/>
            <person name="Scoffone F."/>
            <person name="Sekiguchi J."/>
            <person name="Sekowska A."/>
            <person name="Seror S.J."/>
            <person name="Serror P."/>
            <person name="Shin B.-S."/>
            <person name="Soldo B."/>
            <person name="Sorokin A."/>
            <person name="Tacconi E."/>
            <person name="Takagi T."/>
            <person name="Takahashi H."/>
            <person name="Takemaru K."/>
            <person name="Takeuchi M."/>
            <person name="Tamakoshi A."/>
            <person name="Tanaka T."/>
            <person name="Terpstra P."/>
            <person name="Tognoni A."/>
            <person name="Tosato V."/>
            <person name="Uchiyama S."/>
            <person name="Vandenbol M."/>
            <person name="Vannier F."/>
            <person name="Vassarotti A."/>
            <person name="Viari A."/>
            <person name="Wambutt R."/>
            <person name="Wedler E."/>
            <person name="Wedler H."/>
            <person name="Weitzenegger T."/>
            <person name="Winters P."/>
            <person name="Wipat A."/>
            <person name="Yamamoto H."/>
            <person name="Yamane K."/>
            <person name="Yasumoto K."/>
            <person name="Yata K."/>
            <person name="Yoshida K."/>
            <person name="Yoshikawa H.-F."/>
            <person name="Zumstein E."/>
            <person name="Yoshikawa H."/>
            <person name="Danchin A."/>
        </authorList>
    </citation>
    <scope>NUCLEOTIDE SEQUENCE [LARGE SCALE GENOMIC DNA]</scope>
    <source>
        <strain>168</strain>
    </source>
</reference>
<reference key="3">
    <citation type="journal article" date="2010" name="PLoS Genet.">
        <title>The C-terminal domain of the bacterial SSB protein acts as a DNA maintenance hub at active chromosome replication forks.</title>
        <authorList>
            <person name="Costes A."/>
            <person name="Lecointe F."/>
            <person name="McGovern S."/>
            <person name="Quevillon-Cheruel S."/>
            <person name="Polard P."/>
        </authorList>
    </citation>
    <scope>IDENTIFICATION BY MASS SPECTROMETRY</scope>
    <scope>INTERACTION WITH RECS AND SSBA</scope>
    <scope>SUBCELLULAR LOCATION</scope>
    <source>
        <strain>168</strain>
    </source>
</reference>
<dbReference type="EMBL" id="L47648">
    <property type="protein sequence ID" value="AAC83946.1"/>
    <property type="molecule type" value="Genomic_DNA"/>
</dbReference>
<dbReference type="EMBL" id="AL009126">
    <property type="protein sequence ID" value="CAB14219.1"/>
    <property type="molecule type" value="Genomic_DNA"/>
</dbReference>
<dbReference type="PIR" id="F69932">
    <property type="entry name" value="F69932"/>
</dbReference>
<dbReference type="RefSeq" id="WP_004398594.1">
    <property type="nucleotide sequence ID" value="NZ_OZ025638.1"/>
</dbReference>
<dbReference type="SMR" id="P50728"/>
<dbReference type="FunCoup" id="P50728">
    <property type="interactions" value="10"/>
</dbReference>
<dbReference type="STRING" id="224308.BSU23030"/>
<dbReference type="PaxDb" id="224308-BSU23030"/>
<dbReference type="EnsemblBacteria" id="CAB14219">
    <property type="protein sequence ID" value="CAB14219"/>
    <property type="gene ID" value="BSU_23030"/>
</dbReference>
<dbReference type="GeneID" id="938973"/>
<dbReference type="KEGG" id="bsu:BSU23030"/>
<dbReference type="PATRIC" id="fig|224308.179.peg.2510"/>
<dbReference type="eggNOG" id="COG4955">
    <property type="taxonomic scope" value="Bacteria"/>
</dbReference>
<dbReference type="InParanoid" id="P50728"/>
<dbReference type="OrthoDB" id="2354672at2"/>
<dbReference type="PhylomeDB" id="P50728"/>
<dbReference type="BioCyc" id="BSUB:BSU23030-MONOMER"/>
<dbReference type="Proteomes" id="UP000001570">
    <property type="component" value="Chromosome"/>
</dbReference>
<dbReference type="GO" id="GO:0005737">
    <property type="term" value="C:cytoplasm"/>
    <property type="evidence" value="ECO:0007669"/>
    <property type="project" value="UniProtKB-KW"/>
</dbReference>
<dbReference type="GO" id="GO:0009295">
    <property type="term" value="C:nucleoid"/>
    <property type="evidence" value="ECO:0007669"/>
    <property type="project" value="UniProtKB-SubCell"/>
</dbReference>
<dbReference type="Gene3D" id="1.10.10.1390">
    <property type="entry name" value="ATP-dependent DNA helicase RecQ"/>
    <property type="match status" value="1"/>
</dbReference>
<dbReference type="InterPro" id="IPR029491">
    <property type="entry name" value="Helicase_HTH"/>
</dbReference>
<dbReference type="InterPro" id="IPR008308">
    <property type="entry name" value="YpbB-like"/>
</dbReference>
<dbReference type="Pfam" id="PF14493">
    <property type="entry name" value="HTH_40"/>
    <property type="match status" value="1"/>
</dbReference>
<dbReference type="PIRSF" id="PIRSF021350">
    <property type="entry name" value="UCP021350"/>
    <property type="match status" value="1"/>
</dbReference>
<gene>
    <name type="primary">ypbB</name>
    <name type="ordered locus">BSU23030</name>
</gene>
<organism>
    <name type="scientific">Bacillus subtilis (strain 168)</name>
    <dbReference type="NCBI Taxonomy" id="224308"/>
    <lineage>
        <taxon>Bacteria</taxon>
        <taxon>Bacillati</taxon>
        <taxon>Bacillota</taxon>
        <taxon>Bacilli</taxon>
        <taxon>Bacillales</taxon>
        <taxon>Bacillaceae</taxon>
        <taxon>Bacillus</taxon>
    </lineage>
</organism>
<keyword id="KW-0963">Cytoplasm</keyword>
<keyword id="KW-1185">Reference proteome</keyword>
<evidence type="ECO:0000269" key="1">
    <source>
    </source>
</evidence>
<evidence type="ECO:0000305" key="2">
    <source>
    </source>
</evidence>
<name>YPBB_BACSU</name>
<proteinExistence type="evidence at protein level"/>
<accession>P50728</accession>